<keyword id="KW-0968">Cytoplasmic vesicle</keyword>
<keyword id="KW-0256">Endoplasmic reticulum</keyword>
<keyword id="KW-0325">Glycoprotein</keyword>
<keyword id="KW-0333">Golgi apparatus</keyword>
<keyword id="KW-0472">Membrane</keyword>
<keyword id="KW-0762">Sugar transport</keyword>
<keyword id="KW-0812">Transmembrane</keyword>
<keyword id="KW-1133">Transmembrane helix</keyword>
<keyword id="KW-0813">Transport</keyword>
<feature type="chain" id="PRO_0000391672" description="GDP-mannose transporter 1">
    <location>
        <begin position="1"/>
        <end position="337"/>
    </location>
</feature>
<feature type="topological domain" description="Cytoplasmic" evidence="1">
    <location>
        <begin position="1"/>
        <end position="16"/>
    </location>
</feature>
<feature type="transmembrane region" description="Helical" evidence="2">
    <location>
        <begin position="17"/>
        <end position="37"/>
    </location>
</feature>
<feature type="topological domain" description="Lumenal" evidence="1">
    <location>
        <begin position="38"/>
        <end position="51"/>
    </location>
</feature>
<feature type="transmembrane region" description="Helical" evidence="2">
    <location>
        <begin position="52"/>
        <end position="72"/>
    </location>
</feature>
<feature type="topological domain" description="Cytoplasmic" evidence="1">
    <location>
        <begin position="73"/>
        <end position="92"/>
    </location>
</feature>
<feature type="transmembrane region" description="Helical" evidence="2">
    <location>
        <begin position="93"/>
        <end position="113"/>
    </location>
</feature>
<feature type="topological domain" description="Lumenal" evidence="1">
    <location>
        <begin position="114"/>
        <end position="119"/>
    </location>
</feature>
<feature type="transmembrane region" description="Helical" evidence="2">
    <location>
        <begin position="120"/>
        <end position="140"/>
    </location>
</feature>
<feature type="topological domain" description="Cytoplasmic" evidence="1">
    <location>
        <begin position="141"/>
        <end position="144"/>
    </location>
</feature>
<feature type="transmembrane region" description="Helical" evidence="2">
    <location>
        <begin position="145"/>
        <end position="165"/>
    </location>
</feature>
<feature type="topological domain" description="Lumenal" evidence="1">
    <location>
        <begin position="166"/>
        <end position="180"/>
    </location>
</feature>
<feature type="transmembrane region" description="Helical" evidence="2">
    <location>
        <begin position="181"/>
        <end position="201"/>
    </location>
</feature>
<feature type="topological domain" description="Cytoplasmic" evidence="1">
    <location>
        <begin position="202"/>
        <end position="215"/>
    </location>
</feature>
<feature type="transmembrane region" description="Helical" evidence="2">
    <location>
        <begin position="216"/>
        <end position="236"/>
    </location>
</feature>
<feature type="topological domain" description="Lumenal" evidence="1">
    <location>
        <begin position="237"/>
        <end position="252"/>
    </location>
</feature>
<feature type="transmembrane region" description="Helical" evidence="2">
    <location>
        <begin position="253"/>
        <end position="273"/>
    </location>
</feature>
<feature type="topological domain" description="Cytoplasmic" evidence="1">
    <location>
        <begin position="274"/>
        <end position="279"/>
    </location>
</feature>
<feature type="transmembrane region" description="Helical" evidence="2">
    <location>
        <begin position="280"/>
        <end position="300"/>
    </location>
</feature>
<feature type="topological domain" description="Lumenal" evidence="1">
    <location>
        <begin position="301"/>
        <end position="304"/>
    </location>
</feature>
<feature type="transmembrane region" description="Helical" evidence="2">
    <location>
        <begin position="305"/>
        <end position="325"/>
    </location>
</feature>
<feature type="topological domain" description="Cytoplasmic" evidence="1">
    <location>
        <begin position="326"/>
        <end position="337"/>
    </location>
</feature>
<feature type="glycosylation site" description="N-linked (GlcNAc...) asparagine" evidence="2">
    <location>
        <position position="119"/>
    </location>
</feature>
<feature type="glycosylation site" description="N-linked (GlcNAc...) asparagine" evidence="2">
    <location>
        <position position="242"/>
    </location>
</feature>
<feature type="glycosylation site" description="N-linked (GlcNAc...) asparagine" evidence="2">
    <location>
        <position position="246"/>
    </location>
</feature>
<feature type="glycosylation site" description="N-linked (GlcNAc...) asparagine" evidence="2">
    <location>
        <position position="249"/>
    </location>
</feature>
<reference key="1">
    <citation type="submission" date="2005-03" db="EMBL/GenBank/DDBJ databases">
        <title>Annotation of the Saccharomyces cerevisiae RM11-1a genome.</title>
        <authorList>
            <consortium name="The Broad Institute Genome Sequencing Platform"/>
            <person name="Birren B.W."/>
            <person name="Lander E.S."/>
            <person name="Galagan J.E."/>
            <person name="Nusbaum C."/>
            <person name="Devon K."/>
            <person name="Cuomo C."/>
            <person name="Jaffe D.B."/>
            <person name="Butler J."/>
            <person name="Alvarez P."/>
            <person name="Gnerre S."/>
            <person name="Grabherr M."/>
            <person name="Kleber M."/>
            <person name="Mauceli E.W."/>
            <person name="Brockman W."/>
            <person name="MacCallum I.A."/>
            <person name="Rounsley S."/>
            <person name="Young S.K."/>
            <person name="LaButti K."/>
            <person name="Pushparaj V."/>
            <person name="DeCaprio D."/>
            <person name="Crawford M."/>
            <person name="Koehrsen M."/>
            <person name="Engels R."/>
            <person name="Montgomery P."/>
            <person name="Pearson M."/>
            <person name="Howarth C."/>
            <person name="Larson L."/>
            <person name="Luoma S."/>
            <person name="White J."/>
            <person name="O'Leary S."/>
            <person name="Kodira C.D."/>
            <person name="Zeng Q."/>
            <person name="Yandava C."/>
            <person name="Alvarado L."/>
            <person name="Pratt S."/>
            <person name="Kruglyak L."/>
        </authorList>
    </citation>
    <scope>NUCLEOTIDE SEQUENCE [LARGE SCALE GENOMIC DNA]</scope>
    <source>
        <strain>RM11-1a</strain>
    </source>
</reference>
<organism>
    <name type="scientific">Saccharomyces cerevisiae (strain RM11-1a)</name>
    <name type="common">Baker's yeast</name>
    <dbReference type="NCBI Taxonomy" id="285006"/>
    <lineage>
        <taxon>Eukaryota</taxon>
        <taxon>Fungi</taxon>
        <taxon>Dikarya</taxon>
        <taxon>Ascomycota</taxon>
        <taxon>Saccharomycotina</taxon>
        <taxon>Saccharomycetes</taxon>
        <taxon>Saccharomycetales</taxon>
        <taxon>Saccharomycetaceae</taxon>
        <taxon>Saccharomyces</taxon>
    </lineage>
</organism>
<dbReference type="EMBL" id="CH408044">
    <property type="protein sequence ID" value="EDV10425.1"/>
    <property type="molecule type" value="Genomic_DNA"/>
</dbReference>
<dbReference type="SMR" id="B3LHR7"/>
<dbReference type="GlyCosmos" id="B3LHR7">
    <property type="glycosylation" value="4 sites, No reported glycans"/>
</dbReference>
<dbReference type="HOGENOM" id="CLU_025360_1_2_1"/>
<dbReference type="OrthoDB" id="3994at4893"/>
<dbReference type="Proteomes" id="UP000008335">
    <property type="component" value="Unassembled WGS sequence"/>
</dbReference>
<dbReference type="GO" id="GO:0030659">
    <property type="term" value="C:cytoplasmic vesicle membrane"/>
    <property type="evidence" value="ECO:0007669"/>
    <property type="project" value="UniProtKB-SubCell"/>
</dbReference>
<dbReference type="GO" id="GO:0005789">
    <property type="term" value="C:endoplasmic reticulum membrane"/>
    <property type="evidence" value="ECO:0007669"/>
    <property type="project" value="UniProtKB-SubCell"/>
</dbReference>
<dbReference type="GO" id="GO:0000139">
    <property type="term" value="C:Golgi membrane"/>
    <property type="evidence" value="ECO:0007669"/>
    <property type="project" value="UniProtKB-SubCell"/>
</dbReference>
<dbReference type="GO" id="GO:0055085">
    <property type="term" value="P:transmembrane transport"/>
    <property type="evidence" value="ECO:0007669"/>
    <property type="project" value="InterPro"/>
</dbReference>
<dbReference type="InterPro" id="IPR013657">
    <property type="entry name" value="SCL35B1-4/HUT1"/>
</dbReference>
<dbReference type="InterPro" id="IPR050186">
    <property type="entry name" value="TPT_transporter"/>
</dbReference>
<dbReference type="NCBIfam" id="TIGR00803">
    <property type="entry name" value="nst"/>
    <property type="match status" value="1"/>
</dbReference>
<dbReference type="PANTHER" id="PTHR11132">
    <property type="entry name" value="SOLUTE CARRIER FAMILY 35"/>
    <property type="match status" value="1"/>
</dbReference>
<dbReference type="Pfam" id="PF08449">
    <property type="entry name" value="UAA"/>
    <property type="match status" value="1"/>
</dbReference>
<dbReference type="SUPFAM" id="SSF103481">
    <property type="entry name" value="Multidrug resistance efflux transporter EmrE"/>
    <property type="match status" value="1"/>
</dbReference>
<accession>B3LHR7</accession>
<sequence>MSELKTGHAGHNPWASVANSGPISILSYCGSSILMTVTNKFVVNLKDFNMNFVMLFVQSLVCTITLIILRILGYAKFRSLNKTDAKNWFPISFLLVLMIYTSSKALQYLAVPIYTIFKNLTIILIAYGEVLFFGGSVTSMELSSFLLMVLSSVVATWGDQQAVAAKAASLAEGAAGAVASFNPGYFWMFTNCITSALFVLIMRKRIKLTNFKDFDTMFYNNVLALPILLLFSFCVEDWSSVNLTNNFSNDSLTAMIISGVASVGISYCSGWCVRVTSSTTYSMVGALNKLPIALSGLIFFDAPRNFLSILSIFIGFLSGIIYAVAKQKKQQAQPLRK</sequence>
<comment type="function">
    <text evidence="1">Involved in the import of GDP-mannose from the cytoplasm into the Golgi lumen. Defective copy causes severe glycosylation defect and abnormal retention of soluble endoplasmic reticulum proteins. Involved in vanadate sensitivity (By similarity).</text>
</comment>
<comment type="subunit">
    <text evidence="1">Homooligomer.</text>
</comment>
<comment type="subcellular location">
    <subcellularLocation>
        <location evidence="1">Golgi apparatus membrane</location>
        <topology evidence="1">Multi-pass membrane protein</topology>
    </subcellularLocation>
    <subcellularLocation>
        <location evidence="1">Cytoplasmic vesicle membrane</location>
        <topology evidence="1">Multi-pass membrane protein</topology>
    </subcellularLocation>
    <subcellularLocation>
        <location evidence="1">Endoplasmic reticulum membrane</location>
        <topology evidence="1">Multi-pass membrane protein</topology>
    </subcellularLocation>
    <text evidence="1">Recycles between the Golgi apparatus and the endoplasmic reticulum.</text>
</comment>
<comment type="similarity">
    <text evidence="3">Belongs to the TPT transporter family. SLC35D subfamily.</text>
</comment>
<evidence type="ECO:0000250" key="1"/>
<evidence type="ECO:0000255" key="2"/>
<evidence type="ECO:0000305" key="3"/>
<proteinExistence type="inferred from homology"/>
<gene>
    <name type="primary">VRG4</name>
    <name type="synonym">GOG5</name>
    <name type="synonym">LDB3</name>
    <name type="synonym">MCD3</name>
    <name type="synonym">VAN2</name>
    <name type="synonym">VIG4</name>
    <name type="ORF">SCRG_01209</name>
</gene>
<name>GMT1_YEAS1</name>
<protein>
    <recommendedName>
        <fullName>GDP-mannose transporter 1</fullName>
        <shortName>GMT 1</shortName>
    </recommendedName>
    <alternativeName>
        <fullName>Low dye-binding protein 3</fullName>
    </alternativeName>
    <alternativeName>
        <fullName>Morphogenesis checkpoint-dependent protein 3</fullName>
    </alternativeName>
    <alternativeName>
        <fullName>Vanadate resistance glycosylation protein 4</fullName>
    </alternativeName>
</protein>